<accession>Q03IG4</accession>
<evidence type="ECO:0000255" key="1">
    <source>
        <dbReference type="HAMAP-Rule" id="MF_01364"/>
    </source>
</evidence>
<evidence type="ECO:0000305" key="2"/>
<proteinExistence type="inferred from homology"/>
<feature type="chain" id="PRO_1000067968" description="Small ribosomal subunit protein uS14">
    <location>
        <begin position="1"/>
        <end position="61"/>
    </location>
</feature>
<feature type="binding site" evidence="1">
    <location>
        <position position="24"/>
    </location>
    <ligand>
        <name>Zn(2+)</name>
        <dbReference type="ChEBI" id="CHEBI:29105"/>
    </ligand>
</feature>
<feature type="binding site" evidence="1">
    <location>
        <position position="27"/>
    </location>
    <ligand>
        <name>Zn(2+)</name>
        <dbReference type="ChEBI" id="CHEBI:29105"/>
    </ligand>
</feature>
<feature type="binding site" evidence="1">
    <location>
        <position position="40"/>
    </location>
    <ligand>
        <name>Zn(2+)</name>
        <dbReference type="ChEBI" id="CHEBI:29105"/>
    </ligand>
</feature>
<feature type="binding site" evidence="1">
    <location>
        <position position="43"/>
    </location>
    <ligand>
        <name>Zn(2+)</name>
        <dbReference type="ChEBI" id="CHEBI:29105"/>
    </ligand>
</feature>
<keyword id="KW-0479">Metal-binding</keyword>
<keyword id="KW-0687">Ribonucleoprotein</keyword>
<keyword id="KW-0689">Ribosomal protein</keyword>
<keyword id="KW-0694">RNA-binding</keyword>
<keyword id="KW-0699">rRNA-binding</keyword>
<keyword id="KW-0862">Zinc</keyword>
<gene>
    <name evidence="1" type="primary">rpsZ</name>
    <name evidence="1" type="synonym">rpsN</name>
    <name type="ordered locus">STER_1894</name>
</gene>
<sequence length="61" mass="7096">MAKKSLIAKNKRPAKFSTQAYTRCERCGRPHSVYRKFKLCRVCFRQLAHRGQIPGVTKASW</sequence>
<comment type="function">
    <text evidence="1">Binds 16S rRNA, required for the assembly of 30S particles and may also be responsible for determining the conformation of the 16S rRNA at the A site.</text>
</comment>
<comment type="cofactor">
    <cofactor evidence="1">
        <name>Zn(2+)</name>
        <dbReference type="ChEBI" id="CHEBI:29105"/>
    </cofactor>
    <text evidence="1">Binds 1 zinc ion per subunit.</text>
</comment>
<comment type="subunit">
    <text evidence="1">Part of the 30S ribosomal subunit. Contacts proteins S3 and S10.</text>
</comment>
<comment type="similarity">
    <text evidence="1">Belongs to the universal ribosomal protein uS14 family. Zinc-binding uS14 subfamily.</text>
</comment>
<reference key="1">
    <citation type="journal article" date="2006" name="Proc. Natl. Acad. Sci. U.S.A.">
        <title>Comparative genomics of the lactic acid bacteria.</title>
        <authorList>
            <person name="Makarova K.S."/>
            <person name="Slesarev A."/>
            <person name="Wolf Y.I."/>
            <person name="Sorokin A."/>
            <person name="Mirkin B."/>
            <person name="Koonin E.V."/>
            <person name="Pavlov A."/>
            <person name="Pavlova N."/>
            <person name="Karamychev V."/>
            <person name="Polouchine N."/>
            <person name="Shakhova V."/>
            <person name="Grigoriev I."/>
            <person name="Lou Y."/>
            <person name="Rohksar D."/>
            <person name="Lucas S."/>
            <person name="Huang K."/>
            <person name="Goodstein D.M."/>
            <person name="Hawkins T."/>
            <person name="Plengvidhya V."/>
            <person name="Welker D."/>
            <person name="Hughes J."/>
            <person name="Goh Y."/>
            <person name="Benson A."/>
            <person name="Baldwin K."/>
            <person name="Lee J.-H."/>
            <person name="Diaz-Muniz I."/>
            <person name="Dosti B."/>
            <person name="Smeianov V."/>
            <person name="Wechter W."/>
            <person name="Barabote R."/>
            <person name="Lorca G."/>
            <person name="Altermann E."/>
            <person name="Barrangou R."/>
            <person name="Ganesan B."/>
            <person name="Xie Y."/>
            <person name="Rawsthorne H."/>
            <person name="Tamir D."/>
            <person name="Parker C."/>
            <person name="Breidt F."/>
            <person name="Broadbent J.R."/>
            <person name="Hutkins R."/>
            <person name="O'Sullivan D."/>
            <person name="Steele J."/>
            <person name="Unlu G."/>
            <person name="Saier M.H. Jr."/>
            <person name="Klaenhammer T."/>
            <person name="Richardson P."/>
            <person name="Kozyavkin S."/>
            <person name="Weimer B.C."/>
            <person name="Mills D.A."/>
        </authorList>
    </citation>
    <scope>NUCLEOTIDE SEQUENCE [LARGE SCALE GENOMIC DNA]</scope>
    <source>
        <strain>ATCC BAA-491 / LMD-9</strain>
    </source>
</reference>
<organism>
    <name type="scientific">Streptococcus thermophilus (strain ATCC BAA-491 / LMD-9)</name>
    <dbReference type="NCBI Taxonomy" id="322159"/>
    <lineage>
        <taxon>Bacteria</taxon>
        <taxon>Bacillati</taxon>
        <taxon>Bacillota</taxon>
        <taxon>Bacilli</taxon>
        <taxon>Lactobacillales</taxon>
        <taxon>Streptococcaceae</taxon>
        <taxon>Streptococcus</taxon>
    </lineage>
</organism>
<dbReference type="EMBL" id="CP000419">
    <property type="protein sequence ID" value="ABJ67008.1"/>
    <property type="molecule type" value="Genomic_DNA"/>
</dbReference>
<dbReference type="RefSeq" id="WP_011681715.1">
    <property type="nucleotide sequence ID" value="NC_008532.1"/>
</dbReference>
<dbReference type="SMR" id="Q03IG4"/>
<dbReference type="KEGG" id="ste:STER_1894"/>
<dbReference type="HOGENOM" id="CLU_139869_3_0_9"/>
<dbReference type="GO" id="GO:0015935">
    <property type="term" value="C:small ribosomal subunit"/>
    <property type="evidence" value="ECO:0007669"/>
    <property type="project" value="TreeGrafter"/>
</dbReference>
<dbReference type="GO" id="GO:0019843">
    <property type="term" value="F:rRNA binding"/>
    <property type="evidence" value="ECO:0007669"/>
    <property type="project" value="UniProtKB-UniRule"/>
</dbReference>
<dbReference type="GO" id="GO:0003735">
    <property type="term" value="F:structural constituent of ribosome"/>
    <property type="evidence" value="ECO:0007669"/>
    <property type="project" value="InterPro"/>
</dbReference>
<dbReference type="GO" id="GO:0008270">
    <property type="term" value="F:zinc ion binding"/>
    <property type="evidence" value="ECO:0007669"/>
    <property type="project" value="UniProtKB-UniRule"/>
</dbReference>
<dbReference type="GO" id="GO:0006412">
    <property type="term" value="P:translation"/>
    <property type="evidence" value="ECO:0007669"/>
    <property type="project" value="UniProtKB-UniRule"/>
</dbReference>
<dbReference type="FunFam" id="4.10.830.10:FF:000001">
    <property type="entry name" value="30S ribosomal protein S14 type Z"/>
    <property type="match status" value="1"/>
</dbReference>
<dbReference type="Gene3D" id="4.10.830.10">
    <property type="entry name" value="30s Ribosomal Protein S14, Chain N"/>
    <property type="match status" value="1"/>
</dbReference>
<dbReference type="HAMAP" id="MF_01364_B">
    <property type="entry name" value="Ribosomal_uS14_2_B"/>
    <property type="match status" value="1"/>
</dbReference>
<dbReference type="InterPro" id="IPR001209">
    <property type="entry name" value="Ribosomal_uS14"/>
</dbReference>
<dbReference type="InterPro" id="IPR023053">
    <property type="entry name" value="Ribosomal_uS14_bact"/>
</dbReference>
<dbReference type="InterPro" id="IPR018271">
    <property type="entry name" value="Ribosomal_uS14_CS"/>
</dbReference>
<dbReference type="InterPro" id="IPR043140">
    <property type="entry name" value="Ribosomal_uS14_sf"/>
</dbReference>
<dbReference type="NCBIfam" id="NF005974">
    <property type="entry name" value="PRK08061.1"/>
    <property type="match status" value="1"/>
</dbReference>
<dbReference type="PANTHER" id="PTHR19836">
    <property type="entry name" value="30S RIBOSOMAL PROTEIN S14"/>
    <property type="match status" value="1"/>
</dbReference>
<dbReference type="PANTHER" id="PTHR19836:SF26">
    <property type="entry name" value="SMALL RIBOSOMAL SUBUNIT PROTEIN US14B"/>
    <property type="match status" value="1"/>
</dbReference>
<dbReference type="Pfam" id="PF00253">
    <property type="entry name" value="Ribosomal_S14"/>
    <property type="match status" value="1"/>
</dbReference>
<dbReference type="SUPFAM" id="SSF57716">
    <property type="entry name" value="Glucocorticoid receptor-like (DNA-binding domain)"/>
    <property type="match status" value="1"/>
</dbReference>
<dbReference type="PROSITE" id="PS00527">
    <property type="entry name" value="RIBOSOMAL_S14"/>
    <property type="match status" value="1"/>
</dbReference>
<protein>
    <recommendedName>
        <fullName evidence="1">Small ribosomal subunit protein uS14</fullName>
    </recommendedName>
    <alternativeName>
        <fullName evidence="2">30S ribosomal protein S14 type Z</fullName>
    </alternativeName>
</protein>
<name>RS14Z_STRTD</name>